<reference key="1">
    <citation type="submission" date="2006-06" db="EMBL/GenBank/DDBJ databases">
        <title>Complete sequence of chromosome of Mesorhizobium sp. BNC1.</title>
        <authorList>
            <consortium name="US DOE Joint Genome Institute"/>
            <person name="Copeland A."/>
            <person name="Lucas S."/>
            <person name="Lapidus A."/>
            <person name="Barry K."/>
            <person name="Detter J.C."/>
            <person name="Glavina del Rio T."/>
            <person name="Hammon N."/>
            <person name="Israni S."/>
            <person name="Dalin E."/>
            <person name="Tice H."/>
            <person name="Pitluck S."/>
            <person name="Chertkov O."/>
            <person name="Brettin T."/>
            <person name="Bruce D."/>
            <person name="Han C."/>
            <person name="Tapia R."/>
            <person name="Gilna P."/>
            <person name="Schmutz J."/>
            <person name="Larimer F."/>
            <person name="Land M."/>
            <person name="Hauser L."/>
            <person name="Kyrpides N."/>
            <person name="Mikhailova N."/>
            <person name="Richardson P."/>
        </authorList>
    </citation>
    <scope>NUCLEOTIDE SEQUENCE [LARGE SCALE GENOMIC DNA]</scope>
    <source>
        <strain>BNC1</strain>
    </source>
</reference>
<accession>Q11EH9</accession>
<proteinExistence type="inferred from homology"/>
<comment type="catalytic activity">
    <reaction evidence="1">
        <text>alpha-D-xylose = alpha-D-xylulofuranose</text>
        <dbReference type="Rhea" id="RHEA:22816"/>
        <dbReference type="ChEBI" id="CHEBI:28518"/>
        <dbReference type="ChEBI" id="CHEBI:188998"/>
        <dbReference type="EC" id="5.3.1.5"/>
    </reaction>
</comment>
<comment type="cofactor">
    <cofactor evidence="1">
        <name>Mg(2+)</name>
        <dbReference type="ChEBI" id="CHEBI:18420"/>
    </cofactor>
    <text evidence="1">Binds 2 magnesium ions per subunit.</text>
</comment>
<comment type="subunit">
    <text evidence="1">Homotetramer.</text>
</comment>
<comment type="subcellular location">
    <subcellularLocation>
        <location evidence="1">Cytoplasm</location>
    </subcellularLocation>
</comment>
<comment type="similarity">
    <text evidence="1">Belongs to the xylose isomerase family.</text>
</comment>
<protein>
    <recommendedName>
        <fullName evidence="1">Xylose isomerase</fullName>
        <ecNumber evidence="1">5.3.1.5</ecNumber>
    </recommendedName>
</protein>
<organism>
    <name type="scientific">Chelativorans sp. (strain BNC1)</name>
    <dbReference type="NCBI Taxonomy" id="266779"/>
    <lineage>
        <taxon>Bacteria</taxon>
        <taxon>Pseudomonadati</taxon>
        <taxon>Pseudomonadota</taxon>
        <taxon>Alphaproteobacteria</taxon>
        <taxon>Hyphomicrobiales</taxon>
        <taxon>Phyllobacteriaceae</taxon>
        <taxon>Chelativorans</taxon>
    </lineage>
</organism>
<keyword id="KW-0119">Carbohydrate metabolism</keyword>
<keyword id="KW-0963">Cytoplasm</keyword>
<keyword id="KW-0413">Isomerase</keyword>
<keyword id="KW-0460">Magnesium</keyword>
<keyword id="KW-0479">Metal-binding</keyword>
<keyword id="KW-0859">Xylose metabolism</keyword>
<dbReference type="EC" id="5.3.1.5" evidence="1"/>
<dbReference type="EMBL" id="CP000390">
    <property type="protein sequence ID" value="ABG64196.1"/>
    <property type="molecule type" value="Genomic_DNA"/>
</dbReference>
<dbReference type="SMR" id="Q11EH9"/>
<dbReference type="STRING" id="266779.Meso_2820"/>
<dbReference type="KEGG" id="mes:Meso_2820"/>
<dbReference type="eggNOG" id="COG2115">
    <property type="taxonomic scope" value="Bacteria"/>
</dbReference>
<dbReference type="HOGENOM" id="CLU_037261_1_0_5"/>
<dbReference type="OrthoDB" id="9763981at2"/>
<dbReference type="GO" id="GO:0005737">
    <property type="term" value="C:cytoplasm"/>
    <property type="evidence" value="ECO:0007669"/>
    <property type="project" value="UniProtKB-SubCell"/>
</dbReference>
<dbReference type="GO" id="GO:0000287">
    <property type="term" value="F:magnesium ion binding"/>
    <property type="evidence" value="ECO:0007669"/>
    <property type="project" value="UniProtKB-UniRule"/>
</dbReference>
<dbReference type="GO" id="GO:0009045">
    <property type="term" value="F:xylose isomerase activity"/>
    <property type="evidence" value="ECO:0007669"/>
    <property type="project" value="UniProtKB-UniRule"/>
</dbReference>
<dbReference type="GO" id="GO:0042732">
    <property type="term" value="P:D-xylose metabolic process"/>
    <property type="evidence" value="ECO:0007669"/>
    <property type="project" value="UniProtKB-UniRule"/>
</dbReference>
<dbReference type="Gene3D" id="3.20.20.150">
    <property type="entry name" value="Divalent-metal-dependent TIM barrel enzymes"/>
    <property type="match status" value="1"/>
</dbReference>
<dbReference type="HAMAP" id="MF_00455">
    <property type="entry name" value="Xylose_isom_A"/>
    <property type="match status" value="1"/>
</dbReference>
<dbReference type="InterPro" id="IPR036237">
    <property type="entry name" value="Xyl_isomerase-like_sf"/>
</dbReference>
<dbReference type="InterPro" id="IPR013452">
    <property type="entry name" value="Xylose_isom_bac"/>
</dbReference>
<dbReference type="InterPro" id="IPR001998">
    <property type="entry name" value="Xylose_isomerase"/>
</dbReference>
<dbReference type="NCBIfam" id="NF003998">
    <property type="entry name" value="PRK05474.1"/>
    <property type="match status" value="1"/>
</dbReference>
<dbReference type="NCBIfam" id="TIGR02630">
    <property type="entry name" value="xylose_isom_A"/>
    <property type="match status" value="1"/>
</dbReference>
<dbReference type="PANTHER" id="PTHR48408">
    <property type="match status" value="1"/>
</dbReference>
<dbReference type="PANTHER" id="PTHR48408:SF1">
    <property type="entry name" value="XYLOSE ISOMERASE"/>
    <property type="match status" value="1"/>
</dbReference>
<dbReference type="PRINTS" id="PR00688">
    <property type="entry name" value="XYLOSISMRASE"/>
</dbReference>
<dbReference type="SUPFAM" id="SSF51658">
    <property type="entry name" value="Xylose isomerase-like"/>
    <property type="match status" value="1"/>
</dbReference>
<dbReference type="PROSITE" id="PS51415">
    <property type="entry name" value="XYLOSE_ISOMERASE"/>
    <property type="match status" value="1"/>
</dbReference>
<name>XYLA_CHESB</name>
<evidence type="ECO:0000255" key="1">
    <source>
        <dbReference type="HAMAP-Rule" id="MF_00455"/>
    </source>
</evidence>
<feature type="chain" id="PRO_1000026446" description="Xylose isomerase">
    <location>
        <begin position="1"/>
        <end position="436"/>
    </location>
</feature>
<feature type="active site" evidence="1">
    <location>
        <position position="100"/>
    </location>
</feature>
<feature type="active site" evidence="1">
    <location>
        <position position="103"/>
    </location>
</feature>
<feature type="binding site" evidence="1">
    <location>
        <position position="231"/>
    </location>
    <ligand>
        <name>Mg(2+)</name>
        <dbReference type="ChEBI" id="CHEBI:18420"/>
        <label>1</label>
    </ligand>
</feature>
<feature type="binding site" evidence="1">
    <location>
        <position position="267"/>
    </location>
    <ligand>
        <name>Mg(2+)</name>
        <dbReference type="ChEBI" id="CHEBI:18420"/>
        <label>1</label>
    </ligand>
</feature>
<feature type="binding site" evidence="1">
    <location>
        <position position="267"/>
    </location>
    <ligand>
        <name>Mg(2+)</name>
        <dbReference type="ChEBI" id="CHEBI:18420"/>
        <label>2</label>
    </ligand>
</feature>
<feature type="binding site" evidence="1">
    <location>
        <position position="270"/>
    </location>
    <ligand>
        <name>Mg(2+)</name>
        <dbReference type="ChEBI" id="CHEBI:18420"/>
        <label>2</label>
    </ligand>
</feature>
<feature type="binding site" evidence="1">
    <location>
        <position position="295"/>
    </location>
    <ligand>
        <name>Mg(2+)</name>
        <dbReference type="ChEBI" id="CHEBI:18420"/>
        <label>1</label>
    </ligand>
</feature>
<feature type="binding site" evidence="1">
    <location>
        <position position="306"/>
    </location>
    <ligand>
        <name>Mg(2+)</name>
        <dbReference type="ChEBI" id="CHEBI:18420"/>
        <label>2</label>
    </ligand>
</feature>
<feature type="binding site" evidence="1">
    <location>
        <position position="308"/>
    </location>
    <ligand>
        <name>Mg(2+)</name>
        <dbReference type="ChEBI" id="CHEBI:18420"/>
        <label>2</label>
    </ligand>
</feature>
<feature type="binding site" evidence="1">
    <location>
        <position position="338"/>
    </location>
    <ligand>
        <name>Mg(2+)</name>
        <dbReference type="ChEBI" id="CHEBI:18420"/>
        <label>1</label>
    </ligand>
</feature>
<gene>
    <name evidence="1" type="primary">xylA</name>
    <name type="ordered locus">Meso_2820</name>
</gene>
<sequence length="436" mass="48817">MSTGFFGNLQPISYEGPQSDNPLAFRHYNPDEVVLGKRLEDHLRFAVCYWHTFVWPGGDPFGGQTFERPWFGDTMERARLKADVAFELFEILGVPFFTFHDADVRPEGASYSESVARLNDIADYIAAKMEKTGVRLLWGTANLFSHRRFMAGAATNPDPDVFAYAAATVKACIDVTKRLNGENYVLWGGREGYETLLNTDLGRELDQLGRFLSMVVDYKHRIGFKGAILIEPKPQEPTKHQYDFDVGTVYGFLKRYGLEDEVKVNIEQGHALLAGHSFEHELALAATLGIFGSIDMNRNDYQSGWDTDQFPNNAPEAALAYYYILQAGGFTTGGTNFDAKLRRQSLDPEDLVAAHIGGMDICAQGLKAAARMIEDKALSGPLEERYSGWNATEAQAMLKGERSLEAIAERVARENLDPKPRSGRQEKLENIINRYV</sequence>